<comment type="function">
    <text>Transcriptional regulator that specifically binds DNA sequence 5'-AGAAnnTTCT-3' known as heat shock promoter elements (HSE).</text>
</comment>
<comment type="subunit">
    <text evidence="1">Homotrimer.</text>
</comment>
<comment type="interaction">
    <interactant intactId="EBI-4457746">
        <id>Q9LV52</id>
    </interactant>
    <interactant intactId="EBI-979206">
        <id>Q9SFD5</id>
        <label>ADA2A</label>
    </interactant>
    <organismsDiffer>false</organismsDiffer>
    <experiments>5</experiments>
</comment>
<comment type="interaction">
    <interactant intactId="EBI-4457746">
        <id>Q9LV52</id>
    </interactant>
    <interactant intactId="EBI-540923">
        <id>O22286</id>
        <label>BPM3</label>
    </interactant>
    <organismsDiffer>false</organismsDiffer>
    <experiments>5</experiments>
</comment>
<comment type="interaction">
    <interactant intactId="EBI-4457746">
        <id>Q9LV52</id>
    </interactant>
    <interactant intactId="EBI-15198195">
        <id>Q8GYY1</id>
        <label>HSFA3</label>
    </interactant>
    <organismsDiffer>false</organismsDiffer>
    <experiments>3</experiments>
</comment>
<comment type="interaction">
    <interactant intactId="EBI-4457746">
        <id>Q9LV52</id>
    </interactant>
    <interactant intactId="EBI-15200882">
        <id>Q9SV12</id>
        <label>HSFA7A</label>
    </interactant>
    <organismsDiffer>false</organismsDiffer>
    <experiments>4</experiments>
</comment>
<comment type="interaction">
    <interactant intactId="EBI-4457746">
        <id>Q9LV52</id>
    </interactant>
    <interactant intactId="EBI-2012188">
        <id>Q8RXD6</id>
        <label>HUB1</label>
    </interactant>
    <organismsDiffer>false</organismsDiffer>
    <experiments>3</experiments>
</comment>
<comment type="interaction">
    <interactant intactId="EBI-4457746">
        <id>Q9LV52</id>
    </interactant>
    <interactant intactId="EBI-2295525">
        <id>O24408</id>
        <label>IAA18</label>
    </interactant>
    <organismsDiffer>false</organismsDiffer>
    <experiments>3</experiments>
</comment>
<comment type="interaction">
    <interactant intactId="EBI-4457746">
        <id>Q9LV52</id>
    </interactant>
    <interactant intactId="EBI-15192297">
        <id>Q9LQF0</id>
        <label>TCP23</label>
    </interactant>
    <organismsDiffer>false</organismsDiffer>
    <experiments>3</experiments>
</comment>
<comment type="interaction">
    <interactant intactId="EBI-4457746">
        <id>Q9LV52</id>
    </interactant>
    <interactant intactId="EBI-2112777">
        <id>Q9SK33</id>
        <label>WRKY60</label>
    </interactant>
    <organismsDiffer>false</organismsDiffer>
    <experiments>3</experiments>
</comment>
<comment type="subcellular location">
    <subcellularLocation>
        <location evidence="4">Nucleus</location>
    </subcellularLocation>
</comment>
<comment type="domain">
    <text>The hydrophobic-rich region (HR-A/B) corresponds to the oligomerization domain.</text>
</comment>
<comment type="PTM">
    <text evidence="1">Exhibits temperature-dependent phosphorylation.</text>
</comment>
<comment type="similarity">
    <text evidence="4">Belongs to the HSF family. Class C subfamily.</text>
</comment>
<gene>
    <name type="primary">HSFC1</name>
    <name type="synonym">HSF08</name>
    <name type="ordered locus">At3g24520</name>
    <name type="ORF">MOB24.9</name>
</gene>
<name>HSFC1_ARATH</name>
<dbReference type="EMBL" id="AB020746">
    <property type="protein sequence ID" value="BAB02003.1"/>
    <property type="molecule type" value="Genomic_DNA"/>
</dbReference>
<dbReference type="EMBL" id="CP002686">
    <property type="protein sequence ID" value="AEE76915.1"/>
    <property type="molecule type" value="Genomic_DNA"/>
</dbReference>
<dbReference type="EMBL" id="AY056111">
    <property type="protein sequence ID" value="AAL06998.1"/>
    <property type="molecule type" value="mRNA"/>
</dbReference>
<dbReference type="EMBL" id="AY072614">
    <property type="protein sequence ID" value="AAL62005.1"/>
    <property type="molecule type" value="mRNA"/>
</dbReference>
<dbReference type="RefSeq" id="NP_189095.1">
    <property type="nucleotide sequence ID" value="NM_113363.2"/>
</dbReference>
<dbReference type="SMR" id="Q9LV52"/>
<dbReference type="BioGRID" id="7378">
    <property type="interactions" value="26"/>
</dbReference>
<dbReference type="FunCoup" id="Q9LV52">
    <property type="interactions" value="20"/>
</dbReference>
<dbReference type="IntAct" id="Q9LV52">
    <property type="interactions" value="28"/>
</dbReference>
<dbReference type="STRING" id="3702.Q9LV52"/>
<dbReference type="MetOSite" id="Q9LV52"/>
<dbReference type="PaxDb" id="3702-AT3G24520.1"/>
<dbReference type="ProteomicsDB" id="232133"/>
<dbReference type="EnsemblPlants" id="AT3G24520.1">
    <property type="protein sequence ID" value="AT3G24520.1"/>
    <property type="gene ID" value="AT3G24520"/>
</dbReference>
<dbReference type="GeneID" id="822047"/>
<dbReference type="Gramene" id="AT3G24520.1">
    <property type="protein sequence ID" value="AT3G24520.1"/>
    <property type="gene ID" value="AT3G24520"/>
</dbReference>
<dbReference type="KEGG" id="ath:AT3G24520"/>
<dbReference type="Araport" id="AT3G24520"/>
<dbReference type="TAIR" id="AT3G24520">
    <property type="gene designation" value="HSFC1"/>
</dbReference>
<dbReference type="eggNOG" id="KOG0627">
    <property type="taxonomic scope" value="Eukaryota"/>
</dbReference>
<dbReference type="HOGENOM" id="CLU_875490_0_0_1"/>
<dbReference type="InParanoid" id="Q9LV52"/>
<dbReference type="OMA" id="KHARGMY"/>
<dbReference type="PhylomeDB" id="Q9LV52"/>
<dbReference type="PRO" id="PR:Q9LV52"/>
<dbReference type="Proteomes" id="UP000006548">
    <property type="component" value="Chromosome 3"/>
</dbReference>
<dbReference type="ExpressionAtlas" id="Q9LV52">
    <property type="expression patterns" value="baseline and differential"/>
</dbReference>
<dbReference type="GO" id="GO:0005634">
    <property type="term" value="C:nucleus"/>
    <property type="evidence" value="ECO:0007669"/>
    <property type="project" value="UniProtKB-SubCell"/>
</dbReference>
<dbReference type="GO" id="GO:0003700">
    <property type="term" value="F:DNA-binding transcription factor activity"/>
    <property type="evidence" value="ECO:0000250"/>
    <property type="project" value="TAIR"/>
</dbReference>
<dbReference type="GO" id="GO:0043565">
    <property type="term" value="F:sequence-specific DNA binding"/>
    <property type="evidence" value="ECO:0007669"/>
    <property type="project" value="InterPro"/>
</dbReference>
<dbReference type="FunFam" id="1.10.10.10:FF:000037">
    <property type="entry name" value="Heat stress transcription factor B-4"/>
    <property type="match status" value="1"/>
</dbReference>
<dbReference type="Gene3D" id="1.10.10.10">
    <property type="entry name" value="Winged helix-like DNA-binding domain superfamily/Winged helix DNA-binding domain"/>
    <property type="match status" value="1"/>
</dbReference>
<dbReference type="InterPro" id="IPR000232">
    <property type="entry name" value="HSF_DNA-bd"/>
</dbReference>
<dbReference type="InterPro" id="IPR036388">
    <property type="entry name" value="WH-like_DNA-bd_sf"/>
</dbReference>
<dbReference type="InterPro" id="IPR036390">
    <property type="entry name" value="WH_DNA-bd_sf"/>
</dbReference>
<dbReference type="PANTHER" id="PTHR10015">
    <property type="entry name" value="HEAT SHOCK TRANSCRIPTION FACTOR"/>
    <property type="match status" value="1"/>
</dbReference>
<dbReference type="PANTHER" id="PTHR10015:SF332">
    <property type="entry name" value="HEAT STRESS TRANSCRIPTION FACTOR C-1"/>
    <property type="match status" value="1"/>
</dbReference>
<dbReference type="Pfam" id="PF00447">
    <property type="entry name" value="HSF_DNA-bind"/>
    <property type="match status" value="1"/>
</dbReference>
<dbReference type="PRINTS" id="PR00056">
    <property type="entry name" value="HSFDOMAIN"/>
</dbReference>
<dbReference type="SMART" id="SM00415">
    <property type="entry name" value="HSF"/>
    <property type="match status" value="1"/>
</dbReference>
<dbReference type="SUPFAM" id="SSF46785">
    <property type="entry name" value="Winged helix' DNA-binding domain"/>
    <property type="match status" value="1"/>
</dbReference>
<dbReference type="PROSITE" id="PS00434">
    <property type="entry name" value="HSF_DOMAIN"/>
    <property type="match status" value="1"/>
</dbReference>
<keyword id="KW-0238">DNA-binding</keyword>
<keyword id="KW-0539">Nucleus</keyword>
<keyword id="KW-0597">Phosphoprotein</keyword>
<keyword id="KW-1185">Reference proteome</keyword>
<keyword id="KW-0346">Stress response</keyword>
<keyword id="KW-0804">Transcription</keyword>
<keyword id="KW-0805">Transcription regulation</keyword>
<organism>
    <name type="scientific">Arabidopsis thaliana</name>
    <name type="common">Mouse-ear cress</name>
    <dbReference type="NCBI Taxonomy" id="3702"/>
    <lineage>
        <taxon>Eukaryota</taxon>
        <taxon>Viridiplantae</taxon>
        <taxon>Streptophyta</taxon>
        <taxon>Embryophyta</taxon>
        <taxon>Tracheophyta</taxon>
        <taxon>Spermatophyta</taxon>
        <taxon>Magnoliopsida</taxon>
        <taxon>eudicotyledons</taxon>
        <taxon>Gunneridae</taxon>
        <taxon>Pentapetalae</taxon>
        <taxon>rosids</taxon>
        <taxon>malvids</taxon>
        <taxon>Brassicales</taxon>
        <taxon>Brassicaceae</taxon>
        <taxon>Camelineae</taxon>
        <taxon>Arabidopsis</taxon>
    </lineage>
</organism>
<reference key="1">
    <citation type="journal article" date="2000" name="DNA Res.">
        <title>Structural analysis of Arabidopsis thaliana chromosome 3. II. Sequence features of the 4,251,695 bp regions covered by 90 P1, TAC and BAC clones.</title>
        <authorList>
            <person name="Kaneko T."/>
            <person name="Katoh T."/>
            <person name="Sato S."/>
            <person name="Nakamura Y."/>
            <person name="Asamizu E."/>
            <person name="Tabata S."/>
        </authorList>
    </citation>
    <scope>NUCLEOTIDE SEQUENCE [LARGE SCALE GENOMIC DNA]</scope>
    <source>
        <strain>cv. Columbia</strain>
    </source>
</reference>
<reference key="2">
    <citation type="journal article" date="2017" name="Plant J.">
        <title>Araport11: a complete reannotation of the Arabidopsis thaliana reference genome.</title>
        <authorList>
            <person name="Cheng C.Y."/>
            <person name="Krishnakumar V."/>
            <person name="Chan A.P."/>
            <person name="Thibaud-Nissen F."/>
            <person name="Schobel S."/>
            <person name="Town C.D."/>
        </authorList>
    </citation>
    <scope>GENOME REANNOTATION</scope>
    <source>
        <strain>cv. Columbia</strain>
    </source>
</reference>
<reference key="3">
    <citation type="journal article" date="2003" name="Science">
        <title>Empirical analysis of transcriptional activity in the Arabidopsis genome.</title>
        <authorList>
            <person name="Yamada K."/>
            <person name="Lim J."/>
            <person name="Dale J.M."/>
            <person name="Chen H."/>
            <person name="Shinn P."/>
            <person name="Palm C.J."/>
            <person name="Southwick A.M."/>
            <person name="Wu H.C."/>
            <person name="Kim C.J."/>
            <person name="Nguyen M."/>
            <person name="Pham P.K."/>
            <person name="Cheuk R.F."/>
            <person name="Karlin-Newmann G."/>
            <person name="Liu S.X."/>
            <person name="Lam B."/>
            <person name="Sakano H."/>
            <person name="Wu T."/>
            <person name="Yu G."/>
            <person name="Miranda M."/>
            <person name="Quach H.L."/>
            <person name="Tripp M."/>
            <person name="Chang C.H."/>
            <person name="Lee J.M."/>
            <person name="Toriumi M.J."/>
            <person name="Chan M.M."/>
            <person name="Tang C.C."/>
            <person name="Onodera C.S."/>
            <person name="Deng J.M."/>
            <person name="Akiyama K."/>
            <person name="Ansari Y."/>
            <person name="Arakawa T."/>
            <person name="Banh J."/>
            <person name="Banno F."/>
            <person name="Bowser L."/>
            <person name="Brooks S.Y."/>
            <person name="Carninci P."/>
            <person name="Chao Q."/>
            <person name="Choy N."/>
            <person name="Enju A."/>
            <person name="Goldsmith A.D."/>
            <person name="Gurjal M."/>
            <person name="Hansen N.F."/>
            <person name="Hayashizaki Y."/>
            <person name="Johnson-Hopson C."/>
            <person name="Hsuan V.W."/>
            <person name="Iida K."/>
            <person name="Karnes M."/>
            <person name="Khan S."/>
            <person name="Koesema E."/>
            <person name="Ishida J."/>
            <person name="Jiang P.X."/>
            <person name="Jones T."/>
            <person name="Kawai J."/>
            <person name="Kamiya A."/>
            <person name="Meyers C."/>
            <person name="Nakajima M."/>
            <person name="Narusaka M."/>
            <person name="Seki M."/>
            <person name="Sakurai T."/>
            <person name="Satou M."/>
            <person name="Tamse R."/>
            <person name="Vaysberg M."/>
            <person name="Wallender E.K."/>
            <person name="Wong C."/>
            <person name="Yamamura Y."/>
            <person name="Yuan S."/>
            <person name="Shinozaki K."/>
            <person name="Davis R.W."/>
            <person name="Theologis A."/>
            <person name="Ecker J.R."/>
        </authorList>
    </citation>
    <scope>NUCLEOTIDE SEQUENCE [LARGE SCALE MRNA]</scope>
    <source>
        <strain>cv. Columbia</strain>
    </source>
</reference>
<reference key="4">
    <citation type="journal article" date="2001" name="Cell Stress Chaperones">
        <title>Arabidopsis and the heat stress transcription factor world: how many heat stress transcription factors do we need?</title>
        <authorList>
            <person name="Nover L."/>
            <person name="Bharti K."/>
            <person name="Doering P."/>
            <person name="Mishra S.K."/>
            <person name="Ganguli A."/>
            <person name="Scharf K.-D."/>
        </authorList>
    </citation>
    <scope>GENE FAMILY</scope>
    <scope>NOMENCLATURE</scope>
</reference>
<reference key="5">
    <citation type="journal article" date="2008" name="J. Genet. Genomics">
        <title>Genome-wide analysis of heat shock transcription factor families in rice and Arabidopsis.</title>
        <authorList>
            <person name="Guo J."/>
            <person name="Wu J."/>
            <person name="Ji Q."/>
            <person name="Wang C."/>
            <person name="Luo L."/>
            <person name="Yuan Y."/>
            <person name="Wang Y."/>
            <person name="Wang J."/>
        </authorList>
    </citation>
    <scope>GENE FAMILY</scope>
    <scope>NOMENCLATURE</scope>
</reference>
<proteinExistence type="evidence at protein level"/>
<feature type="chain" id="PRO_0000270814" description="Heat stress transcription factor C-1">
    <location>
        <begin position="1"/>
        <end position="330"/>
    </location>
</feature>
<feature type="DNA-binding region" evidence="1">
    <location>
        <begin position="15"/>
        <end position="109"/>
    </location>
</feature>
<feature type="region of interest" description="Hydrophobic repeat HR-A/B">
    <location>
        <begin position="114"/>
        <end position="166"/>
    </location>
</feature>
<feature type="region of interest" description="Disordered" evidence="3">
    <location>
        <begin position="180"/>
        <end position="235"/>
    </location>
</feature>
<feature type="region of interest" description="Disordered" evidence="3">
    <location>
        <begin position="268"/>
        <end position="291"/>
    </location>
</feature>
<feature type="short sequence motif" description="Nuclear localization signal" evidence="2">
    <location>
        <begin position="191"/>
        <end position="195"/>
    </location>
</feature>
<feature type="compositionally biased region" description="Low complexity" evidence="3">
    <location>
        <begin position="220"/>
        <end position="229"/>
    </location>
</feature>
<feature type="compositionally biased region" description="Low complexity" evidence="3">
    <location>
        <begin position="268"/>
        <end position="280"/>
    </location>
</feature>
<accession>Q9LV52</accession>
<sequence length="330" mass="37714">MEDDNSNNNNNNNVIAPFIVKTYQMVNDPSTDWLITWGPAHNSFIVVDPLDFSQRILPAYFKHNNFSSFVRQLNTYGFRKVDPDRWEFANEHFLRGQKHLLNNIARRKHARGMYGQDLEDGEIVREIERLKEEQRELEAEIQRMNRRIEATEKRPEQMMAFLYKVVEDPDLLPRMMLEKERTKQQQQVSDKKKRRVTMSTVKSEEEEVEEDEGRVFRVMSSSTPSPSSTENLYRNHSPDGWIVPMTQGQFGSYETGLVAKSMLSNSTSSTSSSLTSTFSLPESVNGGGGGGCGSIQGERRYKETATFGGVVESNPPTTPPYPFSLFRGGF</sequence>
<evidence type="ECO:0000250" key="1"/>
<evidence type="ECO:0000255" key="2"/>
<evidence type="ECO:0000256" key="3">
    <source>
        <dbReference type="SAM" id="MobiDB-lite"/>
    </source>
</evidence>
<evidence type="ECO:0000305" key="4"/>
<protein>
    <recommendedName>
        <fullName>Heat stress transcription factor C-1</fullName>
        <shortName>AtHsfC1</shortName>
    </recommendedName>
    <alternativeName>
        <fullName>AtHsf-08</fullName>
    </alternativeName>
</protein>